<organism>
    <name type="scientific">Alocasia macrorrhizos</name>
    <name type="common">Giant taro</name>
    <name type="synonym">Arum macrorrhizon</name>
    <dbReference type="NCBI Taxonomy" id="4456"/>
    <lineage>
        <taxon>Eukaryota</taxon>
        <taxon>Viridiplantae</taxon>
        <taxon>Streptophyta</taxon>
        <taxon>Embryophyta</taxon>
        <taxon>Tracheophyta</taxon>
        <taxon>Spermatophyta</taxon>
        <taxon>Magnoliopsida</taxon>
        <taxon>Liliopsida</taxon>
        <taxon>Araceae</taxon>
        <taxon>Aroideae</taxon>
        <taxon>Colocasieae</taxon>
        <taxon>Alocasia</taxon>
    </lineage>
</organism>
<comment type="function">
    <text>Ferredoxins are iron-sulfur proteins that transfer electrons in a wide variety of metabolic reactions.</text>
</comment>
<comment type="cofactor">
    <cofactor>
        <name>[2Fe-2S] cluster</name>
        <dbReference type="ChEBI" id="CHEBI:190135"/>
    </cofactor>
    <text>Binds 1 [2Fe-2S] cluster.</text>
</comment>
<comment type="subcellular location">
    <subcellularLocation>
        <location>Plastid</location>
        <location>Chloroplast</location>
    </subcellularLocation>
</comment>
<comment type="similarity">
    <text evidence="2">Belongs to the 2Fe2S plant-type ferredoxin family.</text>
</comment>
<proteinExistence type="evidence at protein level"/>
<keyword id="KW-0001">2Fe-2S</keyword>
<keyword id="KW-0150">Chloroplast</keyword>
<keyword id="KW-0903">Direct protein sequencing</keyword>
<keyword id="KW-0249">Electron transport</keyword>
<keyword id="KW-0408">Iron</keyword>
<keyword id="KW-0411">Iron-sulfur</keyword>
<keyword id="KW-0479">Metal-binding</keyword>
<keyword id="KW-0934">Plastid</keyword>
<keyword id="KW-0813">Transport</keyword>
<accession>P81373</accession>
<reference key="1">
    <citation type="journal article" date="1992" name="Protein Seq. Data Anal.">
        <title>Amino acid sequences of ferredoxins from Alocasia macrorrhiza Schott in Papua New Guinea.</title>
        <authorList>
            <person name="Wada K."/>
            <person name="Sakai H."/>
            <person name="Masui R."/>
            <person name="Ihara M."/>
            <person name="Matsubara H."/>
        </authorList>
    </citation>
    <scope>PROTEIN SEQUENCE</scope>
    <source>
        <tissue>Leaf</tissue>
    </source>
</reference>
<protein>
    <recommendedName>
        <fullName>Ferredoxin-B</fullName>
        <shortName>Fd B</shortName>
    </recommendedName>
</protein>
<sequence length="98" mass="10593">ATYKVKLVTPSGQPLEFECPDDVYILDQAEEEGIDLPYSCRAGSCSSCAGKVKNGNVDQSDGSFLDDDQIGEGWVLTCVAYPTSDVVIETHKEEELTA</sequence>
<name>FERB_ALOMA</name>
<dbReference type="PIR" id="S28199">
    <property type="entry name" value="S28199"/>
</dbReference>
<dbReference type="SMR" id="P81373"/>
<dbReference type="GO" id="GO:0009570">
    <property type="term" value="C:chloroplast stroma"/>
    <property type="evidence" value="ECO:0007669"/>
    <property type="project" value="TreeGrafter"/>
</dbReference>
<dbReference type="GO" id="GO:0051537">
    <property type="term" value="F:2 iron, 2 sulfur cluster binding"/>
    <property type="evidence" value="ECO:0007669"/>
    <property type="project" value="UniProtKB-KW"/>
</dbReference>
<dbReference type="GO" id="GO:0009055">
    <property type="term" value="F:electron transfer activity"/>
    <property type="evidence" value="ECO:0007669"/>
    <property type="project" value="InterPro"/>
</dbReference>
<dbReference type="GO" id="GO:0046872">
    <property type="term" value="F:metal ion binding"/>
    <property type="evidence" value="ECO:0007669"/>
    <property type="project" value="UniProtKB-KW"/>
</dbReference>
<dbReference type="GO" id="GO:0022900">
    <property type="term" value="P:electron transport chain"/>
    <property type="evidence" value="ECO:0007669"/>
    <property type="project" value="InterPro"/>
</dbReference>
<dbReference type="CDD" id="cd00207">
    <property type="entry name" value="fer2"/>
    <property type="match status" value="1"/>
</dbReference>
<dbReference type="FunFam" id="3.10.20.30:FF:000014">
    <property type="entry name" value="Ferredoxin"/>
    <property type="match status" value="1"/>
</dbReference>
<dbReference type="Gene3D" id="3.10.20.30">
    <property type="match status" value="1"/>
</dbReference>
<dbReference type="InterPro" id="IPR036010">
    <property type="entry name" value="2Fe-2S_ferredoxin-like_sf"/>
</dbReference>
<dbReference type="InterPro" id="IPR001041">
    <property type="entry name" value="2Fe-2S_ferredoxin-type"/>
</dbReference>
<dbReference type="InterPro" id="IPR006058">
    <property type="entry name" value="2Fe2S_fd_BS"/>
</dbReference>
<dbReference type="InterPro" id="IPR012675">
    <property type="entry name" value="Beta-grasp_dom_sf"/>
</dbReference>
<dbReference type="InterPro" id="IPR010241">
    <property type="entry name" value="Fd_pln"/>
</dbReference>
<dbReference type="NCBIfam" id="TIGR02008">
    <property type="entry name" value="fdx_plant"/>
    <property type="match status" value="1"/>
</dbReference>
<dbReference type="PANTHER" id="PTHR43112">
    <property type="entry name" value="FERREDOXIN"/>
    <property type="match status" value="1"/>
</dbReference>
<dbReference type="PANTHER" id="PTHR43112:SF3">
    <property type="entry name" value="FERREDOXIN-2, CHLOROPLASTIC"/>
    <property type="match status" value="1"/>
</dbReference>
<dbReference type="Pfam" id="PF00111">
    <property type="entry name" value="Fer2"/>
    <property type="match status" value="1"/>
</dbReference>
<dbReference type="SUPFAM" id="SSF54292">
    <property type="entry name" value="2Fe-2S ferredoxin-like"/>
    <property type="match status" value="1"/>
</dbReference>
<dbReference type="PROSITE" id="PS00197">
    <property type="entry name" value="2FE2S_FER_1"/>
    <property type="match status" value="1"/>
</dbReference>
<dbReference type="PROSITE" id="PS51085">
    <property type="entry name" value="2FE2S_FER_2"/>
    <property type="match status" value="1"/>
</dbReference>
<feature type="chain" id="PRO_0000189298" description="Ferredoxin-B">
    <location>
        <begin position="1"/>
        <end position="98"/>
    </location>
</feature>
<feature type="domain" description="2Fe-2S ferredoxin-type" evidence="1">
    <location>
        <begin position="3"/>
        <end position="94"/>
    </location>
</feature>
<feature type="binding site" evidence="1">
    <location>
        <position position="40"/>
    </location>
    <ligand>
        <name>[2Fe-2S] cluster</name>
        <dbReference type="ChEBI" id="CHEBI:190135"/>
    </ligand>
</feature>
<feature type="binding site" evidence="1">
    <location>
        <position position="45"/>
    </location>
    <ligand>
        <name>[2Fe-2S] cluster</name>
        <dbReference type="ChEBI" id="CHEBI:190135"/>
    </ligand>
</feature>
<feature type="binding site" evidence="1">
    <location>
        <position position="48"/>
    </location>
    <ligand>
        <name>[2Fe-2S] cluster</name>
        <dbReference type="ChEBI" id="CHEBI:190135"/>
    </ligand>
</feature>
<feature type="binding site" evidence="1">
    <location>
        <position position="78"/>
    </location>
    <ligand>
        <name>[2Fe-2S] cluster</name>
        <dbReference type="ChEBI" id="CHEBI:190135"/>
    </ligand>
</feature>
<evidence type="ECO:0000255" key="1">
    <source>
        <dbReference type="PROSITE-ProRule" id="PRU00465"/>
    </source>
</evidence>
<evidence type="ECO:0000305" key="2"/>